<organismHost>
    <name type="scientific">Homo sapiens</name>
    <name type="common">Human</name>
    <dbReference type="NCBI Taxonomy" id="9606"/>
</organismHost>
<organism>
    <name type="scientific">Vaccinia virus (strain Copenhagen)</name>
    <name type="common">VACV</name>
    <dbReference type="NCBI Taxonomy" id="10249"/>
    <lineage>
        <taxon>Viruses</taxon>
        <taxon>Varidnaviria</taxon>
        <taxon>Bamfordvirae</taxon>
        <taxon>Nucleocytoviricota</taxon>
        <taxon>Pokkesviricetes</taxon>
        <taxon>Chitovirales</taxon>
        <taxon>Poxviridae</taxon>
        <taxon>Chordopoxvirinae</taxon>
        <taxon>Orthopoxvirus</taxon>
        <taxon>Vaccinia virus</taxon>
    </lineage>
</organism>
<protein>
    <recommendedName>
        <fullName>Protein OPG157</fullName>
    </recommendedName>
</protein>
<proteinExistence type="inferred from homology"/>
<comment type="function">
    <text evidence="1">Required for the association between the dense viroplasm and the viral membranes to form the mature virion (MV).</text>
</comment>
<comment type="subunit">
    <text evidence="1">Interacts with protein OPG092; the interaction stabilizes both proteins. Interacts with protein OPG062.</text>
</comment>
<comment type="PTM">
    <text evidence="1">Phosphorylated by viral OPG054 kinase.</text>
</comment>
<comment type="similarity">
    <text evidence="3">Belongs to the orthopoxvirus OPG157 family.</text>
</comment>
<accession>P68595</accession>
<accession>P21088</accession>
<reference key="1">
    <citation type="journal article" date="1990" name="Virology">
        <title>The complete DNA sequence of vaccinia virus.</title>
        <authorList>
            <person name="Goebel S.J."/>
            <person name="Johnson G.P."/>
            <person name="Perkus M.E."/>
            <person name="Davis S.W."/>
            <person name="Winslow J.P."/>
            <person name="Paoletti E."/>
        </authorList>
    </citation>
    <scope>NUCLEOTIDE SEQUENCE [LARGE SCALE GENOMIC DNA]</scope>
</reference>
<reference key="2">
    <citation type="journal article" date="1990" name="Virology">
        <title>Appendix to 'The complete DNA sequence of vaccinia virus'.</title>
        <authorList>
            <person name="Goebel S.J."/>
            <person name="Johnson G.P."/>
            <person name="Perkus M.E."/>
            <person name="Davis S.W."/>
            <person name="Winslow J.P."/>
            <person name="Paoletti E."/>
        </authorList>
    </citation>
    <scope>NUCLEOTIDE SEQUENCE [LARGE SCALE GENOMIC DNA]</scope>
</reference>
<feature type="chain" id="PRO_0000099305" description="Protein OPG157">
    <location>
        <begin position="1"/>
        <end position="77"/>
    </location>
</feature>
<feature type="region of interest" description="Disordered" evidence="2">
    <location>
        <begin position="53"/>
        <end position="77"/>
    </location>
</feature>
<keyword id="KW-0597">Phosphoprotein</keyword>
<keyword id="KW-1185">Reference proteome</keyword>
<gene>
    <name type="primary">OPG157</name>
    <name type="ORF">A30L</name>
</gene>
<sequence>MEDLNEANFSHLLINLSNNKDIDAQYASTLSVVHELLSAINFKIFNINKKSKKNSKSIEQHPVVHHAASAGREFNRR</sequence>
<evidence type="ECO:0000250" key="1">
    <source>
        <dbReference type="UniProtKB" id="P68596"/>
    </source>
</evidence>
<evidence type="ECO:0000256" key="2">
    <source>
        <dbReference type="SAM" id="MobiDB-lite"/>
    </source>
</evidence>
<evidence type="ECO:0000305" key="3"/>
<name>PG157_VACCC</name>
<dbReference type="EMBL" id="M35027">
    <property type="protein sequence ID" value="AAA48156.1"/>
    <property type="molecule type" value="Genomic_DNA"/>
</dbReference>
<dbReference type="EMBL" id="X57318">
    <property type="protein sequence ID" value="CAA40580.1"/>
    <property type="molecule type" value="Genomic_DNA"/>
</dbReference>
<dbReference type="PIR" id="E42520">
    <property type="entry name" value="E42520"/>
</dbReference>
<dbReference type="RefSeq" id="YP_233035.1">
    <property type="nucleotide sequence ID" value="NC_006998.1"/>
</dbReference>
<dbReference type="DNASU" id="3707683"/>
<dbReference type="GeneID" id="3707683"/>
<dbReference type="KEGG" id="vg:3707683"/>
<dbReference type="Proteomes" id="UP000008269">
    <property type="component" value="Segment"/>
</dbReference>
<dbReference type="InterPro" id="IPR009257">
    <property type="entry name" value="Chordopox_A30L"/>
</dbReference>
<dbReference type="Pfam" id="PF06015">
    <property type="entry name" value="Chordopox_A30L"/>
    <property type="match status" value="1"/>
</dbReference>